<reference key="1">
    <citation type="journal article" date="2005" name="J. Endocrinol.">
        <title>Cloning and hypothalamic distribution of the chicken thyrotropin-releasing hormone precursor cDNA.</title>
        <authorList>
            <person name="Vandenborne K."/>
            <person name="Roelens S.A."/>
            <person name="Darras V.M."/>
            <person name="Kuehn E.R."/>
            <person name="Van der Geyten S."/>
        </authorList>
    </citation>
    <scope>NUCLEOTIDE SEQUENCE [MRNA]</scope>
    <source>
        <strain>Ross</strain>
        <tissue>Brain</tissue>
    </source>
</reference>
<reference key="2">
    <citation type="submission" date="2005-02" db="EMBL/GenBank/DDBJ databases">
        <title>Molecular cloning of prepro-thyrotropin-releasing hormone cDNA and its expression in the brain of chicken (Gallus gallus).</title>
        <authorList>
            <person name="Aoki Y."/>
            <person name="Masuda T."/>
            <person name="Yasuo S."/>
            <person name="Yoshimura T."/>
            <person name="Ebihara S."/>
            <person name="Iigo M."/>
            <person name="Yanagisawa T."/>
        </authorList>
    </citation>
    <scope>NUCLEOTIDE SEQUENCE [MRNA]</scope>
</reference>
<proteinExistence type="evidence at transcript level"/>
<gene>
    <name type="primary">TRH</name>
</gene>
<protein>
    <recommendedName>
        <fullName>Pro-thyrotropin-releasing hormone</fullName>
        <shortName>Pro-TRH</shortName>
    </recommendedName>
    <alternativeName>
        <fullName>Prothyroliberin</fullName>
    </alternativeName>
    <component>
        <recommendedName>
            <fullName>Thyrotropin-releasing hormone</fullName>
            <shortName>TRH</shortName>
        </recommendedName>
        <alternativeName>
            <fullName>Protirelin</fullName>
        </alternativeName>
        <alternativeName>
            <fullName>TSH-releasing factor</fullName>
        </alternativeName>
        <alternativeName>
            <fullName>Thyroliberin</fullName>
        </alternativeName>
        <alternativeName>
            <fullName>Thyrotropin-releasing factor</fullName>
            <shortName>TRF</shortName>
        </alternativeName>
    </component>
    <component>
        <recommendedName>
            <fullName>Thyroliberin-like</fullName>
        </recommendedName>
    </component>
</protein>
<keyword id="KW-0027">Amidation</keyword>
<keyword id="KW-0165">Cleavage on pair of basic residues</keyword>
<keyword id="KW-0372">Hormone</keyword>
<keyword id="KW-0873">Pyrrolidone carboxylic acid</keyword>
<keyword id="KW-1185">Reference proteome</keyword>
<keyword id="KW-0677">Repeat</keyword>
<keyword id="KW-0964">Secreted</keyword>
<keyword id="KW-0732">Signal</keyword>
<feature type="signal peptide" evidence="2">
    <location>
        <begin position="1"/>
        <end position="24"/>
    </location>
</feature>
<feature type="chain" id="PRO_0000041888" description="Pro-thyrotropin-releasing hormone">
    <location>
        <begin position="25"/>
        <end position="260"/>
    </location>
</feature>
<feature type="peptide" id="PRO_0000041889" description="Thyrotropin-releasing hormone">
    <location>
        <begin position="79"/>
        <end position="81"/>
    </location>
</feature>
<feature type="peptide" id="PRO_0000041890" description="Thyrotropin-releasing hormone">
    <location>
        <begin position="93"/>
        <end position="95"/>
    </location>
</feature>
<feature type="peptide" id="PRO_0000041891" description="Thyroliberin-like">
    <location>
        <begin position="113"/>
        <end position="115"/>
    </location>
</feature>
<feature type="peptide" id="PRO_0000041892" description="Thyrotropin-releasing hormone">
    <location>
        <begin position="134"/>
        <end position="136"/>
    </location>
</feature>
<feature type="peptide" id="PRO_0000041893" description="Thyrotropin-releasing hormone">
    <location>
        <begin position="163"/>
        <end position="165"/>
    </location>
</feature>
<feature type="peptide" id="PRO_0000041895" description="Thyrotropin-releasing hormone">
    <location>
        <begin position="246"/>
        <end position="248"/>
    </location>
</feature>
<feature type="region of interest" description="Disordered" evidence="3">
    <location>
        <begin position="72"/>
        <end position="112"/>
    </location>
</feature>
<feature type="region of interest" description="Disordered" evidence="3">
    <location>
        <begin position="195"/>
        <end position="217"/>
    </location>
</feature>
<feature type="region of interest" description="Disordered" evidence="3">
    <location>
        <begin position="238"/>
        <end position="260"/>
    </location>
</feature>
<feature type="compositionally biased region" description="Basic and acidic residues" evidence="3">
    <location>
        <begin position="85"/>
        <end position="112"/>
    </location>
</feature>
<feature type="compositionally biased region" description="Basic and acidic residues" evidence="3">
    <location>
        <begin position="195"/>
        <end position="207"/>
    </location>
</feature>
<feature type="modified residue" description="Pyrrolidone carboxylic acid" evidence="1">
    <location>
        <position position="79"/>
    </location>
</feature>
<feature type="modified residue" description="Proline amide" evidence="1">
    <location>
        <position position="81"/>
    </location>
</feature>
<feature type="modified residue" description="Pyrrolidone carboxylic acid" evidence="1">
    <location>
        <position position="93"/>
    </location>
</feature>
<feature type="modified residue" description="Proline amide" evidence="1">
    <location>
        <position position="95"/>
    </location>
</feature>
<feature type="modified residue" description="Pyrrolidone carboxylic acid" evidence="1">
    <location>
        <position position="113"/>
    </location>
</feature>
<feature type="modified residue" description="Leucine amide" evidence="1">
    <location>
        <position position="115"/>
    </location>
</feature>
<feature type="modified residue" description="Pyrrolidone carboxylic acid" evidence="1">
    <location>
        <position position="134"/>
    </location>
</feature>
<feature type="modified residue" description="Proline amide" evidence="1">
    <location>
        <position position="136"/>
    </location>
</feature>
<feature type="modified residue" description="Pyrrolidone carboxylic acid" evidence="1">
    <location>
        <position position="163"/>
    </location>
</feature>
<feature type="modified residue" description="Proline amide" evidence="1">
    <location>
        <position position="165"/>
    </location>
</feature>
<feature type="modified residue" description="Pyrrolidone carboxylic acid" evidence="1">
    <location>
        <position position="246"/>
    </location>
</feature>
<feature type="modified residue" description="Proline amide" evidence="1">
    <location>
        <position position="248"/>
    </location>
</feature>
<organism>
    <name type="scientific">Gallus gallus</name>
    <name type="common">Chicken</name>
    <dbReference type="NCBI Taxonomy" id="9031"/>
    <lineage>
        <taxon>Eukaryota</taxon>
        <taxon>Metazoa</taxon>
        <taxon>Chordata</taxon>
        <taxon>Craniata</taxon>
        <taxon>Vertebrata</taxon>
        <taxon>Euteleostomi</taxon>
        <taxon>Archelosauria</taxon>
        <taxon>Archosauria</taxon>
        <taxon>Dinosauria</taxon>
        <taxon>Saurischia</taxon>
        <taxon>Theropoda</taxon>
        <taxon>Coelurosauria</taxon>
        <taxon>Aves</taxon>
        <taxon>Neognathae</taxon>
        <taxon>Galloanserae</taxon>
        <taxon>Galliformes</taxon>
        <taxon>Phasianidae</taxon>
        <taxon>Phasianinae</taxon>
        <taxon>Gallus</taxon>
    </lineage>
</organism>
<accession>Q6ZXC3</accession>
<accession>Q5DW25</accession>
<evidence type="ECO:0000250" key="1"/>
<evidence type="ECO:0000255" key="2"/>
<evidence type="ECO:0000256" key="3">
    <source>
        <dbReference type="SAM" id="MobiDB-lite"/>
    </source>
</evidence>
<evidence type="ECO:0000305" key="4"/>
<name>TRH_CHICK</name>
<sequence>MPSIQLPVLLLCLTLSGVCLNGRQFPPELSENMGRSSLDDILQRSGSHMLQSVLKKVEKKEEMNKELNMPLPQWLSKRQHPGKRYISDPEKRQHPGKRDVEEKASFGDIQKRQHLGKTEVEGYLVNYLELKKRQHPGRRSLWDQSTDISSSQLTYLNELSKRQHPGRRYLMYKHQHPSKRGWNDELDLSDQNWEKHQQFGNRDRDSDSPDYTGPCDLQQSAICNKDSLLLDLAEKFSKEGVEEKHQHPGRRSAWENETEE</sequence>
<dbReference type="EMBL" id="AJ703806">
    <property type="protein sequence ID" value="CAG28319.2"/>
    <property type="molecule type" value="mRNA"/>
</dbReference>
<dbReference type="EMBL" id="AB205116">
    <property type="protein sequence ID" value="BAD90101.1"/>
    <property type="molecule type" value="mRNA"/>
</dbReference>
<dbReference type="RefSeq" id="NP_001025554.1">
    <property type="nucleotide sequence ID" value="NM_001030383.2"/>
</dbReference>
<dbReference type="RefSeq" id="XP_015148528.1">
    <property type="nucleotide sequence ID" value="XM_015293042.1"/>
</dbReference>
<dbReference type="RefSeq" id="XP_040502099.1">
    <property type="nucleotide sequence ID" value="XM_040646165.2"/>
</dbReference>
<dbReference type="RefSeq" id="XP_046782142.1">
    <property type="nucleotide sequence ID" value="XM_046926186.1"/>
</dbReference>
<dbReference type="SMR" id="Q6ZXC3"/>
<dbReference type="STRING" id="9031.ENSGALP00000013820"/>
<dbReference type="PaxDb" id="9031-ENSGALP00000042342"/>
<dbReference type="Ensembl" id="ENSGALT00010053243.1">
    <property type="protein sequence ID" value="ENSGALP00010032089.1"/>
    <property type="gene ID" value="ENSGALG00010021890.1"/>
</dbReference>
<dbReference type="GeneID" id="414344"/>
<dbReference type="KEGG" id="gga:414344"/>
<dbReference type="CTD" id="7200"/>
<dbReference type="VEuPathDB" id="HostDB:geneid_414344"/>
<dbReference type="eggNOG" id="ENOG502RWH0">
    <property type="taxonomic scope" value="Eukaryota"/>
</dbReference>
<dbReference type="GeneTree" id="ENSGT00390000016951"/>
<dbReference type="HOGENOM" id="CLU_101029_0_0_1"/>
<dbReference type="InParanoid" id="Q6ZXC3"/>
<dbReference type="OMA" id="QESFTCN"/>
<dbReference type="OrthoDB" id="9949225at2759"/>
<dbReference type="PhylomeDB" id="Q6ZXC3"/>
<dbReference type="TreeFam" id="TF332073"/>
<dbReference type="Reactome" id="R-GGA-375276">
    <property type="pathway name" value="Peptide ligand-binding receptors"/>
</dbReference>
<dbReference type="Reactome" id="R-GGA-416476">
    <property type="pathway name" value="G alpha (q) signalling events"/>
</dbReference>
<dbReference type="PRO" id="PR:Q6ZXC3"/>
<dbReference type="Proteomes" id="UP000000539">
    <property type="component" value="Chromosome 12"/>
</dbReference>
<dbReference type="Bgee" id="ENSGALG00000008490">
    <property type="expression patterns" value="Expressed in testis and 4 other cell types or tissues"/>
</dbReference>
<dbReference type="GO" id="GO:0005576">
    <property type="term" value="C:extracellular region"/>
    <property type="evidence" value="ECO:0007669"/>
    <property type="project" value="UniProtKB-SubCell"/>
</dbReference>
<dbReference type="GO" id="GO:0030141">
    <property type="term" value="C:secretory granule"/>
    <property type="evidence" value="ECO:0000318"/>
    <property type="project" value="GO_Central"/>
</dbReference>
<dbReference type="GO" id="GO:0008437">
    <property type="term" value="F:thyrotropin-releasing hormone activity"/>
    <property type="evidence" value="ECO:0000318"/>
    <property type="project" value="GO_Central"/>
</dbReference>
<dbReference type="GO" id="GO:0042755">
    <property type="term" value="P:eating behavior"/>
    <property type="evidence" value="ECO:0000318"/>
    <property type="project" value="GO_Central"/>
</dbReference>
<dbReference type="GO" id="GO:0001692">
    <property type="term" value="P:histamine metabolic process"/>
    <property type="evidence" value="ECO:0000318"/>
    <property type="project" value="GO_Central"/>
</dbReference>
<dbReference type="GO" id="GO:0009755">
    <property type="term" value="P:hormone-mediated signaling pathway"/>
    <property type="evidence" value="ECO:0007669"/>
    <property type="project" value="InterPro"/>
</dbReference>
<dbReference type="GO" id="GO:0014050">
    <property type="term" value="P:negative regulation of glutamate secretion"/>
    <property type="evidence" value="ECO:0000318"/>
    <property type="project" value="GO_Central"/>
</dbReference>
<dbReference type="GO" id="GO:0014054">
    <property type="term" value="P:positive regulation of gamma-aminobutyric acid secretion"/>
    <property type="evidence" value="ECO:0000318"/>
    <property type="project" value="GO_Central"/>
</dbReference>
<dbReference type="GO" id="GO:0032024">
    <property type="term" value="P:positive regulation of insulin secretion"/>
    <property type="evidence" value="ECO:0000318"/>
    <property type="project" value="GO_Central"/>
</dbReference>
<dbReference type="InterPro" id="IPR008857">
    <property type="entry name" value="TRH"/>
</dbReference>
<dbReference type="PANTHER" id="PTHR17530">
    <property type="entry name" value="PRO-THYROTROPIN-RELEASING HORMONE"/>
    <property type="match status" value="1"/>
</dbReference>
<dbReference type="PANTHER" id="PTHR17530:SF2">
    <property type="entry name" value="PRO-THYROTROPIN-RELEASING HORMONE"/>
    <property type="match status" value="1"/>
</dbReference>
<dbReference type="Pfam" id="PF05438">
    <property type="entry name" value="TRH"/>
    <property type="match status" value="1"/>
</dbReference>
<dbReference type="PIRSF" id="PIRSF001795">
    <property type="entry name" value="TRH"/>
    <property type="match status" value="1"/>
</dbReference>
<comment type="function">
    <text evidence="1">Functions as a regulator of the biosynthesis of TSH in the anterior pituitary gland and as a neurotransmitter/ neuromodulator in the central and peripheral nervous systems.</text>
</comment>
<comment type="subcellular location">
    <subcellularLocation>
        <location>Secreted</location>
    </subcellularLocation>
</comment>
<comment type="similarity">
    <text evidence="4">Belongs to the TRH family.</text>
</comment>